<keyword id="KW-0249">Electron transport</keyword>
<keyword id="KW-0349">Heme</keyword>
<keyword id="KW-0408">Iron</keyword>
<keyword id="KW-0472">Membrane</keyword>
<keyword id="KW-0479">Metal-binding</keyword>
<keyword id="KW-0496">Mitochondrion</keyword>
<keyword id="KW-0999">Mitochondrion inner membrane</keyword>
<keyword id="KW-0679">Respiratory chain</keyword>
<keyword id="KW-0812">Transmembrane</keyword>
<keyword id="KW-1133">Transmembrane helix</keyword>
<keyword id="KW-0813">Transport</keyword>
<keyword id="KW-0830">Ubiquinone</keyword>
<sequence>MTNLRKTHPLMKIINHSFIDLPAPSNISAWWNFGSLLGICLVIQILTGLFLAMHYTSDTLTAFSSVAHICRDVNYGWLIRNLHANGASMFFMCLFLHVGRGIYYGSYLYKETWNIGVILLLTVMATAFVGYVLPWGQMSFWGATVITNLLSAIPYIGTTLAEWIWGGFLVDKATLTRFFAFHFILPFIIMALVIVHLLFLHETGSNNPSGINPNSDKIPFHPYYTIKDALGLMFLLLVLLTLALFSPDSLGDPDNFSPANPLNTPPHIKPEWYFLFAYAILRSIPNKLGGVLALLASILILLIIPLLHTANQRSMMFRPVSQTLFWILTANLITLTWIGGQPVEQPFIIIGQSASILLSMLILVLMPLAGLFENYMLKPKW</sequence>
<gene>
    <name type="primary">MT-CYB</name>
    <name type="synonym">COB</name>
    <name type="synonym">CYTB</name>
    <name type="synonym">MTCYB</name>
</gene>
<organism>
    <name type="scientific">Ningaui yvonnae</name>
    <name type="common">Southern ningaui</name>
    <dbReference type="NCBI Taxonomy" id="32554"/>
    <lineage>
        <taxon>Eukaryota</taxon>
        <taxon>Metazoa</taxon>
        <taxon>Chordata</taxon>
        <taxon>Craniata</taxon>
        <taxon>Vertebrata</taxon>
        <taxon>Euteleostomi</taxon>
        <taxon>Mammalia</taxon>
        <taxon>Metatheria</taxon>
        <taxon>Dasyuromorphia</taxon>
        <taxon>Dasyuridae</taxon>
        <taxon>Ningaui</taxon>
    </lineage>
</organism>
<name>CYB_NINYV</name>
<proteinExistence type="inferred from homology"/>
<accession>Q35196</accession>
<comment type="function">
    <text evidence="2">Component of the ubiquinol-cytochrome c reductase complex (complex III or cytochrome b-c1 complex) that is part of the mitochondrial respiratory chain. The b-c1 complex mediates electron transfer from ubiquinol to cytochrome c. Contributes to the generation of a proton gradient across the mitochondrial membrane that is then used for ATP synthesis.</text>
</comment>
<comment type="cofactor">
    <cofactor evidence="2">
        <name>heme b</name>
        <dbReference type="ChEBI" id="CHEBI:60344"/>
    </cofactor>
    <text evidence="2">Binds 2 heme b groups non-covalently.</text>
</comment>
<comment type="subunit">
    <text evidence="2">The cytochrome bc1 complex contains 11 subunits: 3 respiratory subunits (MT-CYB, CYC1 and UQCRFS1), 2 core proteins (UQCRC1 and UQCRC2) and 6 low-molecular weight proteins (UQCRH/QCR6, UQCRB/QCR7, UQCRQ/QCR8, UQCR10/QCR9, UQCR11/QCR10 and a cleavage product of UQCRFS1). This cytochrome bc1 complex then forms a dimer.</text>
</comment>
<comment type="subcellular location">
    <subcellularLocation>
        <location evidence="2">Mitochondrion inner membrane</location>
        <topology evidence="2">Multi-pass membrane protein</topology>
    </subcellularLocation>
</comment>
<comment type="miscellaneous">
    <text evidence="1">Heme 1 (or BL or b562) is low-potential and absorbs at about 562 nm, and heme 2 (or BH or b566) is high-potential and absorbs at about 566 nm.</text>
</comment>
<comment type="similarity">
    <text evidence="3 4">Belongs to the cytochrome b family.</text>
</comment>
<comment type="caution">
    <text evidence="2">The full-length protein contains only eight transmembrane helices, not nine as predicted by bioinformatics tools.</text>
</comment>
<protein>
    <recommendedName>
        <fullName>Cytochrome b</fullName>
    </recommendedName>
    <alternativeName>
        <fullName>Complex III subunit 3</fullName>
    </alternativeName>
    <alternativeName>
        <fullName>Complex III subunit III</fullName>
    </alternativeName>
    <alternativeName>
        <fullName>Cytochrome b-c1 complex subunit 3</fullName>
    </alternativeName>
    <alternativeName>
        <fullName>Ubiquinol-cytochrome-c reductase complex cytochrome b subunit</fullName>
    </alternativeName>
</protein>
<reference key="1">
    <citation type="journal article" date="1994" name="J. Mammal. Evol.">
        <title>Phylogenetic structure of the marsupial family Dasyuridae based on cytochrome-b DNA sequences.</title>
        <authorList>
            <person name="Krajewski C."/>
            <person name="Painter J."/>
            <person name="Buckley L."/>
            <person name="Westerman M."/>
        </authorList>
    </citation>
    <scope>NUCLEOTIDE SEQUENCE [GENOMIC DNA]</scope>
</reference>
<geneLocation type="mitochondrion"/>
<feature type="chain" id="PRO_0000061277" description="Cytochrome b">
    <location>
        <begin position="1"/>
        <end position="381"/>
    </location>
</feature>
<feature type="transmembrane region" description="Helical" evidence="2">
    <location>
        <begin position="33"/>
        <end position="53"/>
    </location>
</feature>
<feature type="transmembrane region" description="Helical" evidence="2">
    <location>
        <begin position="77"/>
        <end position="98"/>
    </location>
</feature>
<feature type="transmembrane region" description="Helical" evidence="2">
    <location>
        <begin position="113"/>
        <end position="133"/>
    </location>
</feature>
<feature type="transmembrane region" description="Helical" evidence="2">
    <location>
        <begin position="178"/>
        <end position="198"/>
    </location>
</feature>
<feature type="transmembrane region" description="Helical" evidence="2">
    <location>
        <begin position="226"/>
        <end position="246"/>
    </location>
</feature>
<feature type="transmembrane region" description="Helical" evidence="2">
    <location>
        <begin position="288"/>
        <end position="308"/>
    </location>
</feature>
<feature type="transmembrane region" description="Helical" evidence="2">
    <location>
        <begin position="320"/>
        <end position="340"/>
    </location>
</feature>
<feature type="transmembrane region" description="Helical" evidence="2">
    <location>
        <begin position="347"/>
        <end position="367"/>
    </location>
</feature>
<feature type="binding site" description="axial binding residue" evidence="2">
    <location>
        <position position="83"/>
    </location>
    <ligand>
        <name>heme b</name>
        <dbReference type="ChEBI" id="CHEBI:60344"/>
        <label>b562</label>
    </ligand>
    <ligandPart>
        <name>Fe</name>
        <dbReference type="ChEBI" id="CHEBI:18248"/>
    </ligandPart>
</feature>
<feature type="binding site" description="axial binding residue" evidence="2">
    <location>
        <position position="97"/>
    </location>
    <ligand>
        <name>heme b</name>
        <dbReference type="ChEBI" id="CHEBI:60344"/>
        <label>b566</label>
    </ligand>
    <ligandPart>
        <name>Fe</name>
        <dbReference type="ChEBI" id="CHEBI:18248"/>
    </ligandPart>
</feature>
<feature type="binding site" description="axial binding residue" evidence="2">
    <location>
        <position position="182"/>
    </location>
    <ligand>
        <name>heme b</name>
        <dbReference type="ChEBI" id="CHEBI:60344"/>
        <label>b562</label>
    </ligand>
    <ligandPart>
        <name>Fe</name>
        <dbReference type="ChEBI" id="CHEBI:18248"/>
    </ligandPart>
</feature>
<feature type="binding site" description="axial binding residue" evidence="2">
    <location>
        <position position="196"/>
    </location>
    <ligand>
        <name>heme b</name>
        <dbReference type="ChEBI" id="CHEBI:60344"/>
        <label>b566</label>
    </ligand>
    <ligandPart>
        <name>Fe</name>
        <dbReference type="ChEBI" id="CHEBI:18248"/>
    </ligandPart>
</feature>
<feature type="binding site" evidence="2">
    <location>
        <position position="201"/>
    </location>
    <ligand>
        <name>a ubiquinone</name>
        <dbReference type="ChEBI" id="CHEBI:16389"/>
    </ligand>
</feature>
<dbReference type="EMBL" id="U07587">
    <property type="protein sequence ID" value="AAB88763.1"/>
    <property type="molecule type" value="Genomic_DNA"/>
</dbReference>
<dbReference type="SMR" id="Q35196"/>
<dbReference type="GO" id="GO:0005743">
    <property type="term" value="C:mitochondrial inner membrane"/>
    <property type="evidence" value="ECO:0007669"/>
    <property type="project" value="UniProtKB-SubCell"/>
</dbReference>
<dbReference type="GO" id="GO:0045275">
    <property type="term" value="C:respiratory chain complex III"/>
    <property type="evidence" value="ECO:0007669"/>
    <property type="project" value="InterPro"/>
</dbReference>
<dbReference type="GO" id="GO:0046872">
    <property type="term" value="F:metal ion binding"/>
    <property type="evidence" value="ECO:0007669"/>
    <property type="project" value="UniProtKB-KW"/>
</dbReference>
<dbReference type="GO" id="GO:0008121">
    <property type="term" value="F:ubiquinol-cytochrome-c reductase activity"/>
    <property type="evidence" value="ECO:0007669"/>
    <property type="project" value="InterPro"/>
</dbReference>
<dbReference type="GO" id="GO:0006122">
    <property type="term" value="P:mitochondrial electron transport, ubiquinol to cytochrome c"/>
    <property type="evidence" value="ECO:0007669"/>
    <property type="project" value="TreeGrafter"/>
</dbReference>
<dbReference type="CDD" id="cd00290">
    <property type="entry name" value="cytochrome_b_C"/>
    <property type="match status" value="1"/>
</dbReference>
<dbReference type="CDD" id="cd00284">
    <property type="entry name" value="Cytochrome_b_N"/>
    <property type="match status" value="1"/>
</dbReference>
<dbReference type="FunFam" id="1.20.810.10:FF:000002">
    <property type="entry name" value="Cytochrome b"/>
    <property type="match status" value="1"/>
</dbReference>
<dbReference type="Gene3D" id="1.20.810.10">
    <property type="entry name" value="Cytochrome Bc1 Complex, Chain C"/>
    <property type="match status" value="1"/>
</dbReference>
<dbReference type="InterPro" id="IPR005798">
    <property type="entry name" value="Cyt_b/b6_C"/>
</dbReference>
<dbReference type="InterPro" id="IPR036150">
    <property type="entry name" value="Cyt_b/b6_C_sf"/>
</dbReference>
<dbReference type="InterPro" id="IPR005797">
    <property type="entry name" value="Cyt_b/b6_N"/>
</dbReference>
<dbReference type="InterPro" id="IPR027387">
    <property type="entry name" value="Cytb/b6-like_sf"/>
</dbReference>
<dbReference type="InterPro" id="IPR030689">
    <property type="entry name" value="Cytochrome_b"/>
</dbReference>
<dbReference type="InterPro" id="IPR048260">
    <property type="entry name" value="Cytochrome_b_C_euk/bac"/>
</dbReference>
<dbReference type="InterPro" id="IPR048259">
    <property type="entry name" value="Cytochrome_b_N_euk/bac"/>
</dbReference>
<dbReference type="InterPro" id="IPR016174">
    <property type="entry name" value="Di-haem_cyt_TM"/>
</dbReference>
<dbReference type="PANTHER" id="PTHR19271">
    <property type="entry name" value="CYTOCHROME B"/>
    <property type="match status" value="1"/>
</dbReference>
<dbReference type="PANTHER" id="PTHR19271:SF16">
    <property type="entry name" value="CYTOCHROME B"/>
    <property type="match status" value="1"/>
</dbReference>
<dbReference type="Pfam" id="PF00032">
    <property type="entry name" value="Cytochrom_B_C"/>
    <property type="match status" value="1"/>
</dbReference>
<dbReference type="Pfam" id="PF00033">
    <property type="entry name" value="Cytochrome_B"/>
    <property type="match status" value="1"/>
</dbReference>
<dbReference type="PIRSF" id="PIRSF038885">
    <property type="entry name" value="COB"/>
    <property type="match status" value="1"/>
</dbReference>
<dbReference type="SUPFAM" id="SSF81648">
    <property type="entry name" value="a domain/subunit of cytochrome bc1 complex (Ubiquinol-cytochrome c reductase)"/>
    <property type="match status" value="1"/>
</dbReference>
<dbReference type="SUPFAM" id="SSF81342">
    <property type="entry name" value="Transmembrane di-heme cytochromes"/>
    <property type="match status" value="1"/>
</dbReference>
<dbReference type="PROSITE" id="PS51003">
    <property type="entry name" value="CYTB_CTER"/>
    <property type="match status" value="1"/>
</dbReference>
<dbReference type="PROSITE" id="PS51002">
    <property type="entry name" value="CYTB_NTER"/>
    <property type="match status" value="1"/>
</dbReference>
<evidence type="ECO:0000250" key="1"/>
<evidence type="ECO:0000250" key="2">
    <source>
        <dbReference type="UniProtKB" id="P00157"/>
    </source>
</evidence>
<evidence type="ECO:0000255" key="3">
    <source>
        <dbReference type="PROSITE-ProRule" id="PRU00967"/>
    </source>
</evidence>
<evidence type="ECO:0000255" key="4">
    <source>
        <dbReference type="PROSITE-ProRule" id="PRU00968"/>
    </source>
</evidence>